<protein>
    <recommendedName>
        <fullName>BTB/POZ domain-containing adapter for CUL3-mediated RhoA degradation protein 2</fullName>
    </recommendedName>
    <alternativeName>
        <fullName>BTB/POZ domain-containing protein TNFAIP1</fullName>
    </alternativeName>
</protein>
<evidence type="ECO:0000250" key="1"/>
<evidence type="ECO:0000255" key="2">
    <source>
        <dbReference type="PROSITE-ProRule" id="PRU00037"/>
    </source>
</evidence>
<evidence type="ECO:0000305" key="3"/>
<dbReference type="EMBL" id="BC090212">
    <property type="protein sequence ID" value="AAH90212.1"/>
    <property type="molecule type" value="mRNA"/>
</dbReference>
<dbReference type="RefSeq" id="NP_001089279.1">
    <property type="nucleotide sequence ID" value="NM_001095810.1"/>
</dbReference>
<dbReference type="SMR" id="Q5EAX2"/>
<dbReference type="DNASU" id="734327"/>
<dbReference type="AGR" id="Xenbase:XB-GENE-6251466"/>
<dbReference type="Xenbase" id="XB-GENE-6251466">
    <property type="gene designation" value="tnfaip1.L"/>
</dbReference>
<dbReference type="OrthoDB" id="2333377at2759"/>
<dbReference type="UniPathway" id="UPA00143"/>
<dbReference type="Proteomes" id="UP000186698">
    <property type="component" value="Unplaced"/>
</dbReference>
<dbReference type="Bgee" id="734327">
    <property type="expression patterns" value="Expressed in egg cell and 19 other cell types or tissues"/>
</dbReference>
<dbReference type="GO" id="GO:0031463">
    <property type="term" value="C:Cul3-RING ubiquitin ligase complex"/>
    <property type="evidence" value="ECO:0000250"/>
    <property type="project" value="UniProtKB"/>
</dbReference>
<dbReference type="GO" id="GO:0005737">
    <property type="term" value="C:cytoplasm"/>
    <property type="evidence" value="ECO:0000250"/>
    <property type="project" value="UniProtKB"/>
</dbReference>
<dbReference type="GO" id="GO:0005768">
    <property type="term" value="C:endosome"/>
    <property type="evidence" value="ECO:0000250"/>
    <property type="project" value="UniProtKB"/>
</dbReference>
<dbReference type="GO" id="GO:0005634">
    <property type="term" value="C:nucleus"/>
    <property type="evidence" value="ECO:0007669"/>
    <property type="project" value="UniProtKB-SubCell"/>
</dbReference>
<dbReference type="GO" id="GO:0031267">
    <property type="term" value="F:small GTPase binding"/>
    <property type="evidence" value="ECO:0000250"/>
    <property type="project" value="UniProtKB"/>
</dbReference>
<dbReference type="GO" id="GO:0004842">
    <property type="term" value="F:ubiquitin-protein transferase activity"/>
    <property type="evidence" value="ECO:0007669"/>
    <property type="project" value="TreeGrafter"/>
</dbReference>
<dbReference type="GO" id="GO:0016477">
    <property type="term" value="P:cell migration"/>
    <property type="evidence" value="ECO:0000250"/>
    <property type="project" value="UniProtKB"/>
</dbReference>
<dbReference type="GO" id="GO:0006955">
    <property type="term" value="P:immune response"/>
    <property type="evidence" value="ECO:0000250"/>
    <property type="project" value="UniProtKB"/>
</dbReference>
<dbReference type="GO" id="GO:0035024">
    <property type="term" value="P:negative regulation of Rho protein signal transduction"/>
    <property type="evidence" value="ECO:0000250"/>
    <property type="project" value="UniProtKB"/>
</dbReference>
<dbReference type="GO" id="GO:0043161">
    <property type="term" value="P:proteasome-mediated ubiquitin-dependent protein catabolic process"/>
    <property type="evidence" value="ECO:0000250"/>
    <property type="project" value="UniProtKB"/>
</dbReference>
<dbReference type="GO" id="GO:0051260">
    <property type="term" value="P:protein homooligomerization"/>
    <property type="evidence" value="ECO:0007669"/>
    <property type="project" value="InterPro"/>
</dbReference>
<dbReference type="GO" id="GO:0016567">
    <property type="term" value="P:protein ubiquitination"/>
    <property type="evidence" value="ECO:0000250"/>
    <property type="project" value="UniProtKB"/>
</dbReference>
<dbReference type="GO" id="GO:0043149">
    <property type="term" value="P:stress fiber assembly"/>
    <property type="evidence" value="ECO:0000250"/>
    <property type="project" value="UniProtKB"/>
</dbReference>
<dbReference type="CDD" id="cd18401">
    <property type="entry name" value="BTB_POZ_TNFAIP1_BACURD2"/>
    <property type="match status" value="1"/>
</dbReference>
<dbReference type="FunFam" id="3.30.710.10:FF:000013">
    <property type="entry name" value="BTB/POZ domain-containing adapter for CUL3-mediated RhoA degradation protein 3"/>
    <property type="match status" value="1"/>
</dbReference>
<dbReference type="Gene3D" id="3.30.710.10">
    <property type="entry name" value="Potassium Channel Kv1.1, Chain A"/>
    <property type="match status" value="1"/>
</dbReference>
<dbReference type="InterPro" id="IPR045068">
    <property type="entry name" value="BACURD1-3"/>
</dbReference>
<dbReference type="InterPro" id="IPR000210">
    <property type="entry name" value="BTB/POZ_dom"/>
</dbReference>
<dbReference type="InterPro" id="IPR011333">
    <property type="entry name" value="SKP1/BTB/POZ_sf"/>
</dbReference>
<dbReference type="InterPro" id="IPR003131">
    <property type="entry name" value="T1-type_BTB"/>
</dbReference>
<dbReference type="PANTHER" id="PTHR11145">
    <property type="entry name" value="BTB/POZ DOMAIN-CONTAINING ADAPTER FOR CUL3-MEDIATED RHOA DEGRADATION PROTEIN FAMILY MEMBER"/>
    <property type="match status" value="1"/>
</dbReference>
<dbReference type="PANTHER" id="PTHR11145:SF17">
    <property type="entry name" value="BTB_POZ DOMAIN-CONTAINING ADAPTER FOR CUL3-MEDIATED RHOA DEGRADATION PROTEIN 2"/>
    <property type="match status" value="1"/>
</dbReference>
<dbReference type="Pfam" id="PF02214">
    <property type="entry name" value="BTB_2"/>
    <property type="match status" value="1"/>
</dbReference>
<dbReference type="SMART" id="SM00225">
    <property type="entry name" value="BTB"/>
    <property type="match status" value="1"/>
</dbReference>
<dbReference type="SUPFAM" id="SSF54695">
    <property type="entry name" value="POZ domain"/>
    <property type="match status" value="1"/>
</dbReference>
<dbReference type="PROSITE" id="PS50097">
    <property type="entry name" value="BTB"/>
    <property type="match status" value="1"/>
</dbReference>
<reference key="1">
    <citation type="submission" date="2005-02" db="EMBL/GenBank/DDBJ databases">
        <authorList>
            <consortium name="NIH - Xenopus Gene Collection (XGC) project"/>
        </authorList>
    </citation>
    <scope>NUCLEOTIDE SEQUENCE [LARGE SCALE MRNA]</scope>
    <source>
        <tissue>Egg</tissue>
    </source>
</reference>
<name>BACD2_XENLA</name>
<keyword id="KW-0963">Cytoplasm</keyword>
<keyword id="KW-0967">Endosome</keyword>
<keyword id="KW-0539">Nucleus</keyword>
<keyword id="KW-1185">Reference proteome</keyword>
<keyword id="KW-0833">Ubl conjugation pathway</keyword>
<accession>Q5EAX2</accession>
<sequence length="319" mass="36488">MSGDTCLTAVCPASGAKPKTYSFKGGCLGNKYIRLNVGGCLYYTTVQVLTRHDTMLKAMFSGRMEVLTDKEGWILIDRCGKHFGSILNYLRDDTIALPKSRHEIKELMAEAKYYLIQGLVDKCQTALQDTNDTYEAVCNIPIITSPKEEEKLIESSAKPVVKLLYNRSNNKYSYTSNSDDHLLKNIELFDKLSLRFNGRVLFIKDVIGDEICCWSFYGQGRKLAEVCCTSIVYATEKKQTKVEFPEARIYEETLNVLLYETPRVPDNSLLEATSRIRSQASHSEDDDGFELRDRVRRIHVKRYSTYDDRQLGHQSAYRD</sequence>
<proteinExistence type="evidence at transcript level"/>
<gene>
    <name type="primary">tnfaip1</name>
</gene>
<feature type="chain" id="PRO_0000331251" description="BTB/POZ domain-containing adapter for CUL3-mediated RhoA degradation protein 2">
    <location>
        <begin position="1"/>
        <end position="319"/>
    </location>
</feature>
<feature type="domain" description="BTB" evidence="2">
    <location>
        <begin position="31"/>
        <end position="99"/>
    </location>
</feature>
<comment type="function">
    <text evidence="1">Substrate-specific adapter of a BCR (BTB-CUL3-RBX1) E3 ubiquitin-protein ligase complex involved in regulation of cytoskeleton structure. The BCR(TNFAIP1) E3 ubiquitin ligase complex mediates the ubiquitination of target proteins, leading to their degradation by the proteasome (By similarity).</text>
</comment>
<comment type="pathway">
    <text>Protein modification; protein ubiquitination.</text>
</comment>
<comment type="subunit">
    <text>Component of the BCR(TNFAIP1) E3 ubiquitin ligase complex, at least composed of cul3, tnfaip1/bacurd2 and rbx1.</text>
</comment>
<comment type="subcellular location">
    <subcellularLocation>
        <location evidence="1">Cytoplasm</location>
    </subcellularLocation>
    <subcellularLocation>
        <location evidence="1">Nucleus</location>
    </subcellularLocation>
    <subcellularLocation>
        <location evidence="1">Endosome</location>
    </subcellularLocation>
</comment>
<comment type="similarity">
    <text evidence="3">Belongs to the BACURD family.</text>
</comment>
<organism>
    <name type="scientific">Xenopus laevis</name>
    <name type="common">African clawed frog</name>
    <dbReference type="NCBI Taxonomy" id="8355"/>
    <lineage>
        <taxon>Eukaryota</taxon>
        <taxon>Metazoa</taxon>
        <taxon>Chordata</taxon>
        <taxon>Craniata</taxon>
        <taxon>Vertebrata</taxon>
        <taxon>Euteleostomi</taxon>
        <taxon>Amphibia</taxon>
        <taxon>Batrachia</taxon>
        <taxon>Anura</taxon>
        <taxon>Pipoidea</taxon>
        <taxon>Pipidae</taxon>
        <taxon>Xenopodinae</taxon>
        <taxon>Xenopus</taxon>
        <taxon>Xenopus</taxon>
    </lineage>
</organism>